<feature type="signal peptide" evidence="3">
    <location>
        <begin position="1"/>
        <end position="20"/>
    </location>
</feature>
<feature type="chain" id="PRO_0000011827" description="Probable xyloglucan endotransglucosylase/hydrolase protein 27">
    <location>
        <begin position="21"/>
        <end position="333"/>
    </location>
</feature>
<feature type="domain" description="GH16" evidence="4">
    <location>
        <begin position="21"/>
        <end position="223"/>
    </location>
</feature>
<feature type="region of interest" description="Disordered" evidence="5">
    <location>
        <begin position="311"/>
        <end position="333"/>
    </location>
</feature>
<feature type="compositionally biased region" description="Basic residues" evidence="5">
    <location>
        <begin position="312"/>
        <end position="324"/>
    </location>
</feature>
<feature type="active site" description="Nucleophile" evidence="2">
    <location>
        <position position="108"/>
    </location>
</feature>
<feature type="active site" description="Proton donor" evidence="2">
    <location>
        <position position="112"/>
    </location>
</feature>
<feature type="binding site" evidence="2">
    <location>
        <position position="112"/>
    </location>
    <ligand>
        <name>xyloglucan</name>
        <dbReference type="ChEBI" id="CHEBI:18233"/>
    </ligand>
</feature>
<feature type="binding site" evidence="2">
    <location>
        <begin position="125"/>
        <end position="127"/>
    </location>
    <ligand>
        <name>xyloglucan</name>
        <dbReference type="ChEBI" id="CHEBI:18233"/>
    </ligand>
</feature>
<feature type="binding site" evidence="2">
    <location>
        <begin position="135"/>
        <end position="139"/>
    </location>
    <ligand>
        <name>xyloglucan</name>
        <dbReference type="ChEBI" id="CHEBI:18233"/>
    </ligand>
</feature>
<feature type="binding site" evidence="2">
    <location>
        <begin position="202"/>
        <end position="203"/>
    </location>
    <ligand>
        <name>xyloglucan</name>
        <dbReference type="ChEBI" id="CHEBI:18233"/>
    </ligand>
</feature>
<feature type="binding site" evidence="2">
    <location>
        <position position="207"/>
    </location>
    <ligand>
        <name>xyloglucan</name>
        <dbReference type="ChEBI" id="CHEBI:18233"/>
    </ligand>
</feature>
<feature type="binding site" evidence="2">
    <location>
        <position position="282"/>
    </location>
    <ligand>
        <name>xyloglucan</name>
        <dbReference type="ChEBI" id="CHEBI:18233"/>
    </ligand>
</feature>
<feature type="site" description="Important for catalytic activity" evidence="2">
    <location>
        <position position="110"/>
    </location>
</feature>
<feature type="glycosylation site" description="N-linked (GlcNAc...) asparagine" evidence="3">
    <location>
        <position position="131"/>
    </location>
</feature>
<feature type="disulfide bond" evidence="2">
    <location>
        <begin position="277"/>
        <end position="290"/>
    </location>
</feature>
<feature type="sequence conflict" description="In Ref. 1; AAD45125." evidence="8" ref="1">
    <original>E</original>
    <variation>Q</variation>
    <location>
        <position position="181"/>
    </location>
</feature>
<feature type="sequence conflict" description="In Ref. 6; AAM63050." evidence="8" ref="6">
    <original>M</original>
    <variation>I</variation>
    <location>
        <position position="250"/>
    </location>
</feature>
<feature type="sequence conflict" description="In Ref. 6; AAM63050." evidence="8" ref="6">
    <original>E</original>
    <variation>K</variation>
    <location>
        <position position="331"/>
    </location>
</feature>
<sequence length="333" mass="38415">METLSRLLVFMSLFSGLVSGFALQNLPITSFEESYTQLFGDKNLFVHQDGKSVRLTLDERTGSGFVSNDYYLHGFFSASIKLPSDYTAGVVVAFYMSNGDMYEKNHDEIDFEFLGNIREKEWRVQTNIYGNGSTHSGREERYNLWFDPTEDFHQYSILWSDSHIIFFVDNVPIREVKRTAEMGGHFPSKPMSLYTTIWDGSKWATNGGKYGVNYKYAPYIARFSDLVLHGCPVDPIEQFPRCDEGAAEDMRAAQEITPSQRSKMDVFRRRLMTYSYCYDRARYNVALSECVVNPAEAQRLRVYDPVRFGGIPRRHRNGKHRSKRSRVDGTESI</sequence>
<name>XTH27_ARATH</name>
<reference key="1">
    <citation type="journal article" date="1999" name="Plant Physiol.">
        <title>Expression of endoxyloglucan transferase genes in acaulis mutants of Arabidopsis.</title>
        <authorList>
            <person name="Akamatsu T."/>
            <person name="Hanzawa Y."/>
            <person name="Ohtake Y."/>
            <person name="Takahashi T."/>
            <person name="Nishitani K."/>
            <person name="Komeda Y."/>
        </authorList>
    </citation>
    <scope>NUCLEOTIDE SEQUENCE [GENOMIC DNA]</scope>
    <scope>TISSUE SPECIFICITY</scope>
    <source>
        <strain>cv. Columbia</strain>
    </source>
</reference>
<reference key="2">
    <citation type="submission" date="1995-07" db="EMBL/GenBank/DDBJ databases">
        <authorList>
            <person name="Okamoto S."/>
            <person name="Kamimai T."/>
            <person name="Nishitani K."/>
        </authorList>
    </citation>
    <scope>NUCLEOTIDE SEQUENCE [MRNA]</scope>
    <source>
        <strain>cv. Columbia</strain>
    </source>
</reference>
<reference key="3">
    <citation type="journal article" date="1999" name="Nature">
        <title>Sequence and analysis of chromosome 2 of the plant Arabidopsis thaliana.</title>
        <authorList>
            <person name="Lin X."/>
            <person name="Kaul S."/>
            <person name="Rounsley S.D."/>
            <person name="Shea T.P."/>
            <person name="Benito M.-I."/>
            <person name="Town C.D."/>
            <person name="Fujii C.Y."/>
            <person name="Mason T.M."/>
            <person name="Bowman C.L."/>
            <person name="Barnstead M.E."/>
            <person name="Feldblyum T.V."/>
            <person name="Buell C.R."/>
            <person name="Ketchum K.A."/>
            <person name="Lee J.J."/>
            <person name="Ronning C.M."/>
            <person name="Koo H.L."/>
            <person name="Moffat K.S."/>
            <person name="Cronin L.A."/>
            <person name="Shen M."/>
            <person name="Pai G."/>
            <person name="Van Aken S."/>
            <person name="Umayam L."/>
            <person name="Tallon L.J."/>
            <person name="Gill J.E."/>
            <person name="Adams M.D."/>
            <person name="Carrera A.J."/>
            <person name="Creasy T.H."/>
            <person name="Goodman H.M."/>
            <person name="Somerville C.R."/>
            <person name="Copenhaver G.P."/>
            <person name="Preuss D."/>
            <person name="Nierman W.C."/>
            <person name="White O."/>
            <person name="Eisen J.A."/>
            <person name="Salzberg S.L."/>
            <person name="Fraser C.M."/>
            <person name="Venter J.C."/>
        </authorList>
    </citation>
    <scope>NUCLEOTIDE SEQUENCE [LARGE SCALE GENOMIC DNA]</scope>
    <source>
        <strain>cv. Columbia</strain>
    </source>
</reference>
<reference key="4">
    <citation type="journal article" date="2017" name="Plant J.">
        <title>Araport11: a complete reannotation of the Arabidopsis thaliana reference genome.</title>
        <authorList>
            <person name="Cheng C.Y."/>
            <person name="Krishnakumar V."/>
            <person name="Chan A.P."/>
            <person name="Thibaud-Nissen F."/>
            <person name="Schobel S."/>
            <person name="Town C.D."/>
        </authorList>
    </citation>
    <scope>GENOME REANNOTATION</scope>
    <source>
        <strain>cv. Columbia</strain>
    </source>
</reference>
<reference key="5">
    <citation type="journal article" date="2003" name="Science">
        <title>Empirical analysis of transcriptional activity in the Arabidopsis genome.</title>
        <authorList>
            <person name="Yamada K."/>
            <person name="Lim J."/>
            <person name="Dale J.M."/>
            <person name="Chen H."/>
            <person name="Shinn P."/>
            <person name="Palm C.J."/>
            <person name="Southwick A.M."/>
            <person name="Wu H.C."/>
            <person name="Kim C.J."/>
            <person name="Nguyen M."/>
            <person name="Pham P.K."/>
            <person name="Cheuk R.F."/>
            <person name="Karlin-Newmann G."/>
            <person name="Liu S.X."/>
            <person name="Lam B."/>
            <person name="Sakano H."/>
            <person name="Wu T."/>
            <person name="Yu G."/>
            <person name="Miranda M."/>
            <person name="Quach H.L."/>
            <person name="Tripp M."/>
            <person name="Chang C.H."/>
            <person name="Lee J.M."/>
            <person name="Toriumi M.J."/>
            <person name="Chan M.M."/>
            <person name="Tang C.C."/>
            <person name="Onodera C.S."/>
            <person name="Deng J.M."/>
            <person name="Akiyama K."/>
            <person name="Ansari Y."/>
            <person name="Arakawa T."/>
            <person name="Banh J."/>
            <person name="Banno F."/>
            <person name="Bowser L."/>
            <person name="Brooks S.Y."/>
            <person name="Carninci P."/>
            <person name="Chao Q."/>
            <person name="Choy N."/>
            <person name="Enju A."/>
            <person name="Goldsmith A.D."/>
            <person name="Gurjal M."/>
            <person name="Hansen N.F."/>
            <person name="Hayashizaki Y."/>
            <person name="Johnson-Hopson C."/>
            <person name="Hsuan V.W."/>
            <person name="Iida K."/>
            <person name="Karnes M."/>
            <person name="Khan S."/>
            <person name="Koesema E."/>
            <person name="Ishida J."/>
            <person name="Jiang P.X."/>
            <person name="Jones T."/>
            <person name="Kawai J."/>
            <person name="Kamiya A."/>
            <person name="Meyers C."/>
            <person name="Nakajima M."/>
            <person name="Narusaka M."/>
            <person name="Seki M."/>
            <person name="Sakurai T."/>
            <person name="Satou M."/>
            <person name="Tamse R."/>
            <person name="Vaysberg M."/>
            <person name="Wallender E.K."/>
            <person name="Wong C."/>
            <person name="Yamamura Y."/>
            <person name="Yuan S."/>
            <person name="Shinozaki K."/>
            <person name="Davis R.W."/>
            <person name="Theologis A."/>
            <person name="Ecker J.R."/>
        </authorList>
    </citation>
    <scope>NUCLEOTIDE SEQUENCE [LARGE SCALE MRNA]</scope>
    <source>
        <strain>cv. Columbia</strain>
    </source>
</reference>
<reference key="6">
    <citation type="submission" date="2002-03" db="EMBL/GenBank/DDBJ databases">
        <title>Full-length cDNA from Arabidopsis thaliana.</title>
        <authorList>
            <person name="Brover V.V."/>
            <person name="Troukhan M.E."/>
            <person name="Alexandrov N.A."/>
            <person name="Lu Y.-P."/>
            <person name="Flavell R.B."/>
            <person name="Feldmann K.A."/>
        </authorList>
    </citation>
    <scope>NUCLEOTIDE SEQUENCE [LARGE SCALE MRNA]</scope>
</reference>
<reference key="7">
    <citation type="journal article" date="2009" name="DNA Res.">
        <title>Analysis of multiple occurrences of alternative splicing events in Arabidopsis thaliana using novel sequenced full-length cDNAs.</title>
        <authorList>
            <person name="Iida K."/>
            <person name="Fukami-Kobayashi K."/>
            <person name="Toyoda A."/>
            <person name="Sakaki Y."/>
            <person name="Kobayashi M."/>
            <person name="Seki M."/>
            <person name="Shinozaki K."/>
        </authorList>
    </citation>
    <scope>NUCLEOTIDE SEQUENCE [LARGE SCALE MRNA] OF 97-333</scope>
    <source>
        <strain>cv. Columbia</strain>
        <tissue>Rosette leaf</tissue>
    </source>
</reference>
<reference key="8">
    <citation type="journal article" date="2002" name="Plant Cell Physiol.">
        <title>The XTH family of enzymes involved in xyloglucan endotransglucosylation and endohydrolysis: current perspectives and a new unifying nomenclature.</title>
        <authorList>
            <person name="Rose J.K.C."/>
            <person name="Braam J."/>
            <person name="Fry S.C."/>
            <person name="Nishitani K."/>
        </authorList>
    </citation>
    <scope>NOMENCLATURE</scope>
</reference>
<reference key="9">
    <citation type="journal article" date="2005" name="Plant J.">
        <title>AtXTH27 plays an essential role in cell wall modification during the development of tracheary elements.</title>
        <authorList>
            <person name="Matsui A."/>
            <person name="Yokoyama R."/>
            <person name="Seki M."/>
            <person name="Ito T."/>
            <person name="Shinozaki K."/>
            <person name="Takahashi T."/>
            <person name="Komeda Y."/>
            <person name="Nishitani K."/>
        </authorList>
    </citation>
    <scope>FUNCTION</scope>
    <scope>DISRUPTION PHENOTYPE</scope>
    <scope>DEVELOPMENTAL STAGE</scope>
    <scope>TISSUE SPECIFICITY</scope>
    <source>
        <strain>cv. Columbia</strain>
        <strain>cv. No-0</strain>
    </source>
</reference>
<organism>
    <name type="scientific">Arabidopsis thaliana</name>
    <name type="common">Mouse-ear cress</name>
    <dbReference type="NCBI Taxonomy" id="3702"/>
    <lineage>
        <taxon>Eukaryota</taxon>
        <taxon>Viridiplantae</taxon>
        <taxon>Streptophyta</taxon>
        <taxon>Embryophyta</taxon>
        <taxon>Tracheophyta</taxon>
        <taxon>Spermatophyta</taxon>
        <taxon>Magnoliopsida</taxon>
        <taxon>eudicotyledons</taxon>
        <taxon>Gunneridae</taxon>
        <taxon>Pentapetalae</taxon>
        <taxon>rosids</taxon>
        <taxon>malvids</taxon>
        <taxon>Brassicales</taxon>
        <taxon>Brassicaceae</taxon>
        <taxon>Camelineae</taxon>
        <taxon>Arabidopsis</taxon>
    </lineage>
</organism>
<comment type="function">
    <text evidence="1 7">Catalyzes xyloglucan endohydrolysis (XEH) and/or endotransglycosylation (XET). Cleaves and religates xyloglucan polymers, an essential constituent of the primary cell wall, and thereby participates in cell wall construction of growing tissues (By similarity). Required for cell wall modification during the development of tracheary elements.</text>
</comment>
<comment type="catalytic activity">
    <reaction>
        <text>breaks a beta-(1-&gt;4) bond in the backbone of a xyloglucan and transfers the xyloglucanyl segment on to O-4 of the non-reducing terminal glucose residue of an acceptor, which can be a xyloglucan or an oligosaccharide of xyloglucan.</text>
        <dbReference type="EC" id="2.4.1.207"/>
    </reaction>
</comment>
<comment type="subcellular location">
    <subcellularLocation>
        <location evidence="8">Secreted</location>
        <location evidence="8">Cell wall</location>
    </subcellularLocation>
    <subcellularLocation>
        <location evidence="8">Secreted</location>
        <location evidence="8">Extracellular space</location>
        <location evidence="8">Apoplast</location>
    </subcellularLocation>
</comment>
<comment type="tissue specificity">
    <text evidence="6 7">Expressed in 7 day old seedlings, roots, hypocotyls, rosette leaves, internodes between nodes bearing axillary shoots, nodes bearing flowers, flower buds, anthers and siliques.</text>
</comment>
<comment type="developmental stage">
    <text evidence="7">Accumulates in the immature tracheary elements of rosette leaves. Expressed in differentiating vasculature of the root, the hypocotyls, and the flower filaments, as well as in the anthers and the inner subepidermal layer of mature siliques.</text>
</comment>
<comment type="PTM">
    <text evidence="1">Contains at least one intrachain disulfide bond essential for its enzymatic activity.</text>
</comment>
<comment type="disruption phenotype">
    <text evidence="7">In xth27-1 and xth27-2, short-shaped tracheary elements in tertiary veins, reduced number of tertiary veins in the first leaf, and yellow lesion-mimic spots in mature rosette leaves.</text>
</comment>
<comment type="miscellaneous">
    <text>In contrast to group 1 and group 2 endotransglucosylase/hydrolase proteins, it may not contain the ligase activity, and may catalyze endohydrolysis xyloglucan polymers only.</text>
</comment>
<comment type="similarity">
    <text evidence="8">Belongs to the glycosyl hydrolase 16 family. XTH group 3 subfamily.</text>
</comment>
<dbReference type="EC" id="2.4.1.207"/>
<dbReference type="EMBL" id="AF163821">
    <property type="protein sequence ID" value="AAD45125.1"/>
    <property type="molecule type" value="Genomic_DNA"/>
</dbReference>
<dbReference type="EMBL" id="D63509">
    <property type="protein sequence ID" value="BAA20289.1"/>
    <property type="molecule type" value="mRNA"/>
</dbReference>
<dbReference type="EMBL" id="AC007069">
    <property type="protein sequence ID" value="AAD21783.1"/>
    <property type="molecule type" value="Genomic_DNA"/>
</dbReference>
<dbReference type="EMBL" id="CP002685">
    <property type="protein sequence ID" value="AEC05508.1"/>
    <property type="molecule type" value="Genomic_DNA"/>
</dbReference>
<dbReference type="EMBL" id="AY059910">
    <property type="protein sequence ID" value="AAL24392.1"/>
    <property type="molecule type" value="mRNA"/>
</dbReference>
<dbReference type="EMBL" id="BT008820">
    <property type="protein sequence ID" value="AAP68259.1"/>
    <property type="molecule type" value="mRNA"/>
</dbReference>
<dbReference type="EMBL" id="AY085835">
    <property type="protein sequence ID" value="AAM63050.1"/>
    <property type="molecule type" value="mRNA"/>
</dbReference>
<dbReference type="EMBL" id="AK317757">
    <property type="protein sequence ID" value="BAH20413.1"/>
    <property type="molecule type" value="mRNA"/>
</dbReference>
<dbReference type="PIR" id="H84429">
    <property type="entry name" value="H84429"/>
</dbReference>
<dbReference type="RefSeq" id="NP_178294.1">
    <property type="nucleotide sequence ID" value="NM_126246.4"/>
</dbReference>
<dbReference type="SMR" id="Q8LDS2"/>
<dbReference type="STRING" id="3702.Q8LDS2"/>
<dbReference type="CAZy" id="GH16">
    <property type="family name" value="Glycoside Hydrolase Family 16"/>
</dbReference>
<dbReference type="GlyCosmos" id="Q8LDS2">
    <property type="glycosylation" value="1 site, No reported glycans"/>
</dbReference>
<dbReference type="GlyGen" id="Q8LDS2">
    <property type="glycosylation" value="1 site"/>
</dbReference>
<dbReference type="PaxDb" id="3702-AT2G01850.1"/>
<dbReference type="ProteomicsDB" id="242579"/>
<dbReference type="EnsemblPlants" id="AT2G01850.1">
    <property type="protein sequence ID" value="AT2G01850.1"/>
    <property type="gene ID" value="AT2G01850"/>
</dbReference>
<dbReference type="GeneID" id="814716"/>
<dbReference type="Gramene" id="AT2G01850.1">
    <property type="protein sequence ID" value="AT2G01850.1"/>
    <property type="gene ID" value="AT2G01850"/>
</dbReference>
<dbReference type="KEGG" id="ath:AT2G01850"/>
<dbReference type="Araport" id="AT2G01850"/>
<dbReference type="TAIR" id="AT2G01850">
    <property type="gene designation" value="EXGT-A3"/>
</dbReference>
<dbReference type="eggNOG" id="ENOG502QVQI">
    <property type="taxonomic scope" value="Eukaryota"/>
</dbReference>
<dbReference type="HOGENOM" id="CLU_048041_1_2_1"/>
<dbReference type="InParanoid" id="Q8LDS2"/>
<dbReference type="OMA" id="NIREKEW"/>
<dbReference type="OrthoDB" id="4781at2759"/>
<dbReference type="PhylomeDB" id="Q8LDS2"/>
<dbReference type="BioCyc" id="ARA:AT2G01850-MONOMER"/>
<dbReference type="PRO" id="PR:Q8LDS2"/>
<dbReference type="Proteomes" id="UP000006548">
    <property type="component" value="Chromosome 2"/>
</dbReference>
<dbReference type="ExpressionAtlas" id="Q8LDS2">
    <property type="expression patterns" value="baseline and differential"/>
</dbReference>
<dbReference type="GO" id="GO:0048046">
    <property type="term" value="C:apoplast"/>
    <property type="evidence" value="ECO:0007669"/>
    <property type="project" value="UniProtKB-SubCell"/>
</dbReference>
<dbReference type="GO" id="GO:0004553">
    <property type="term" value="F:hydrolase activity, hydrolyzing O-glycosyl compounds"/>
    <property type="evidence" value="ECO:0007669"/>
    <property type="project" value="InterPro"/>
</dbReference>
<dbReference type="GO" id="GO:0030247">
    <property type="term" value="F:polysaccharide binding"/>
    <property type="evidence" value="ECO:0000250"/>
    <property type="project" value="UniProtKB"/>
</dbReference>
<dbReference type="GO" id="GO:0016762">
    <property type="term" value="F:xyloglucan:xyloglucosyl transferase activity"/>
    <property type="evidence" value="ECO:0000314"/>
    <property type="project" value="TAIR"/>
</dbReference>
<dbReference type="GO" id="GO:0042546">
    <property type="term" value="P:cell wall biogenesis"/>
    <property type="evidence" value="ECO:0007669"/>
    <property type="project" value="InterPro"/>
</dbReference>
<dbReference type="GO" id="GO:0071555">
    <property type="term" value="P:cell wall organization"/>
    <property type="evidence" value="ECO:0007669"/>
    <property type="project" value="UniProtKB-KW"/>
</dbReference>
<dbReference type="GO" id="GO:0010087">
    <property type="term" value="P:phloem or xylem histogenesis"/>
    <property type="evidence" value="ECO:0000315"/>
    <property type="project" value="TAIR"/>
</dbReference>
<dbReference type="GO" id="GO:0010411">
    <property type="term" value="P:xyloglucan metabolic process"/>
    <property type="evidence" value="ECO:0007669"/>
    <property type="project" value="InterPro"/>
</dbReference>
<dbReference type="CDD" id="cd02176">
    <property type="entry name" value="GH16_XET"/>
    <property type="match status" value="1"/>
</dbReference>
<dbReference type="FunFam" id="2.60.120.200:FF:000025">
    <property type="entry name" value="Xyloglucan endotransglucosylase/hydrolase"/>
    <property type="match status" value="1"/>
</dbReference>
<dbReference type="Gene3D" id="2.60.120.200">
    <property type="match status" value="1"/>
</dbReference>
<dbReference type="InterPro" id="IPR044791">
    <property type="entry name" value="Beta-glucanase/XTH"/>
</dbReference>
<dbReference type="InterPro" id="IPR013320">
    <property type="entry name" value="ConA-like_dom_sf"/>
</dbReference>
<dbReference type="InterPro" id="IPR000757">
    <property type="entry name" value="GH16"/>
</dbReference>
<dbReference type="InterPro" id="IPR010713">
    <property type="entry name" value="XET_C"/>
</dbReference>
<dbReference type="InterPro" id="IPR016455">
    <property type="entry name" value="XTH"/>
</dbReference>
<dbReference type="PANTHER" id="PTHR31062">
    <property type="entry name" value="XYLOGLUCAN ENDOTRANSGLUCOSYLASE/HYDROLASE PROTEIN 8-RELATED"/>
    <property type="match status" value="1"/>
</dbReference>
<dbReference type="Pfam" id="PF00722">
    <property type="entry name" value="Glyco_hydro_16"/>
    <property type="match status" value="1"/>
</dbReference>
<dbReference type="Pfam" id="PF06955">
    <property type="entry name" value="XET_C"/>
    <property type="match status" value="1"/>
</dbReference>
<dbReference type="PIRSF" id="PIRSF005604">
    <property type="entry name" value="XET"/>
    <property type="match status" value="1"/>
</dbReference>
<dbReference type="SUPFAM" id="SSF49899">
    <property type="entry name" value="Concanavalin A-like lectins/glucanases"/>
    <property type="match status" value="1"/>
</dbReference>
<dbReference type="PROSITE" id="PS51762">
    <property type="entry name" value="GH16_2"/>
    <property type="match status" value="1"/>
</dbReference>
<proteinExistence type="evidence at transcript level"/>
<protein>
    <recommendedName>
        <fullName>Probable xyloglucan endotransglucosylase/hydrolase protein 27</fullName>
        <shortName>At-XTH27</shortName>
        <shortName>XTH-27</shortName>
        <ecNumber>2.4.1.207</ecNumber>
    </recommendedName>
</protein>
<evidence type="ECO:0000250" key="1"/>
<evidence type="ECO:0000250" key="2">
    <source>
        <dbReference type="UniProtKB" id="Q8GZD5"/>
    </source>
</evidence>
<evidence type="ECO:0000255" key="3"/>
<evidence type="ECO:0000255" key="4">
    <source>
        <dbReference type="PROSITE-ProRule" id="PRU01098"/>
    </source>
</evidence>
<evidence type="ECO:0000256" key="5">
    <source>
        <dbReference type="SAM" id="MobiDB-lite"/>
    </source>
</evidence>
<evidence type="ECO:0000269" key="6">
    <source>
    </source>
</evidence>
<evidence type="ECO:0000269" key="7">
    <source>
    </source>
</evidence>
<evidence type="ECO:0000305" key="8"/>
<accession>Q8LDS2</accession>
<accession>B9DI46</accession>
<accession>O04906</accession>
<accession>Q9SEB1</accession>
<keyword id="KW-0052">Apoplast</keyword>
<keyword id="KW-0134">Cell wall</keyword>
<keyword id="KW-0961">Cell wall biogenesis/degradation</keyword>
<keyword id="KW-1015">Disulfide bond</keyword>
<keyword id="KW-0325">Glycoprotein</keyword>
<keyword id="KW-0326">Glycosidase</keyword>
<keyword id="KW-0378">Hydrolase</keyword>
<keyword id="KW-1185">Reference proteome</keyword>
<keyword id="KW-0964">Secreted</keyword>
<keyword id="KW-0732">Signal</keyword>
<keyword id="KW-0808">Transferase</keyword>
<gene>
    <name type="primary">XTH27</name>
    <name type="synonym">EXGT-A3</name>
    <name type="ordered locus">At2g01850</name>
    <name type="ORF">T23K3.4</name>
</gene>